<organism>
    <name type="scientific">Salmonella typhimurium (strain LT2 / SGSC1412 / ATCC 700720)</name>
    <dbReference type="NCBI Taxonomy" id="99287"/>
    <lineage>
        <taxon>Bacteria</taxon>
        <taxon>Pseudomonadati</taxon>
        <taxon>Pseudomonadota</taxon>
        <taxon>Gammaproteobacteria</taxon>
        <taxon>Enterobacterales</taxon>
        <taxon>Enterobacteriaceae</taxon>
        <taxon>Salmonella</taxon>
    </lineage>
</organism>
<proteinExistence type="inferred from homology"/>
<comment type="function">
    <text evidence="1">Required for maximal bacterial cellulose synthesis.</text>
</comment>
<comment type="pathway">
    <text>Glycan metabolism; bacterial cellulose biosynthesis.</text>
</comment>
<comment type="similarity">
    <text evidence="3">Belongs to the AcsC/BcsC family.</text>
</comment>
<comment type="sequence caution" evidence="3">
    <conflict type="erroneous initiation">
        <sequence resource="EMBL-CDS" id="CAC44018"/>
    </conflict>
</comment>
<protein>
    <recommendedName>
        <fullName>Cellulose synthase operon protein C</fullName>
    </recommendedName>
</protein>
<feature type="signal peptide" evidence="2">
    <location>
        <begin position="1"/>
        <end position="45"/>
    </location>
</feature>
<feature type="chain" id="PRO_0000106431" description="Cellulose synthase operon protein C">
    <location>
        <begin position="46"/>
        <end position="1180"/>
    </location>
</feature>
<feature type="repeat" description="TPR 1">
    <location>
        <begin position="85"/>
        <end position="118"/>
    </location>
</feature>
<feature type="repeat" description="TPR 2">
    <location>
        <begin position="135"/>
        <end position="168"/>
    </location>
</feature>
<feature type="repeat" description="TPR 3">
    <location>
        <begin position="292"/>
        <end position="325"/>
    </location>
</feature>
<feature type="repeat" description="TPR 4">
    <location>
        <begin position="326"/>
        <end position="359"/>
    </location>
</feature>
<feature type="repeat" description="TPR 5">
    <location>
        <begin position="374"/>
        <end position="407"/>
    </location>
</feature>
<feature type="repeat" description="TPR 6">
    <location>
        <begin position="408"/>
        <end position="441"/>
    </location>
</feature>
<feature type="repeat" description="TPR 7">
    <location>
        <begin position="484"/>
        <end position="517"/>
    </location>
</feature>
<feature type="repeat" description="TPR 8">
    <location>
        <begin position="626"/>
        <end position="659"/>
    </location>
</feature>
<feature type="repeat" description="TPR 9">
    <location>
        <begin position="694"/>
        <end position="727"/>
    </location>
</feature>
<feature type="repeat" description="TPR 10">
    <location>
        <begin position="734"/>
        <end position="767"/>
    </location>
</feature>
<accession>Q8ZLB8</accession>
<accession>Q93IM9</accession>
<dbReference type="EMBL" id="AE006468">
    <property type="protein sequence ID" value="AAL22476.1"/>
    <property type="molecule type" value="Genomic_DNA"/>
</dbReference>
<dbReference type="EMBL" id="AJ315148">
    <property type="protein sequence ID" value="CAC86196.1"/>
    <property type="molecule type" value="Genomic_DNA"/>
</dbReference>
<dbReference type="EMBL" id="AJ315770">
    <property type="protein sequence ID" value="CAC44018.1"/>
    <property type="status" value="ALT_INIT"/>
    <property type="molecule type" value="Genomic_DNA"/>
</dbReference>
<dbReference type="RefSeq" id="WP_001225195.1">
    <property type="nucleotide sequence ID" value="NC_003197.2"/>
</dbReference>
<dbReference type="SMR" id="Q8ZLB8"/>
<dbReference type="STRING" id="99287.STM3616"/>
<dbReference type="PaxDb" id="99287-STM3616"/>
<dbReference type="KEGG" id="stm:STM3616"/>
<dbReference type="PATRIC" id="fig|99287.12.peg.3822"/>
<dbReference type="HOGENOM" id="CLU_001631_2_0_6"/>
<dbReference type="OMA" id="GWLPAYK"/>
<dbReference type="PhylomeDB" id="Q8ZLB8"/>
<dbReference type="BioCyc" id="SENT99287:STM3616-MONOMER"/>
<dbReference type="UniPathway" id="UPA00694"/>
<dbReference type="Proteomes" id="UP000001014">
    <property type="component" value="Chromosome"/>
</dbReference>
<dbReference type="GO" id="GO:0019867">
    <property type="term" value="C:outer membrane"/>
    <property type="evidence" value="ECO:0007669"/>
    <property type="project" value="InterPro"/>
</dbReference>
<dbReference type="GO" id="GO:0030244">
    <property type="term" value="P:cellulose biosynthetic process"/>
    <property type="evidence" value="ECO:0007669"/>
    <property type="project" value="UniProtKB-KW"/>
</dbReference>
<dbReference type="Gene3D" id="1.25.40.10">
    <property type="entry name" value="Tetratricopeptide repeat domain"/>
    <property type="match status" value="5"/>
</dbReference>
<dbReference type="InterPro" id="IPR008410">
    <property type="entry name" value="BCSC_C"/>
</dbReference>
<dbReference type="InterPro" id="IPR011990">
    <property type="entry name" value="TPR-like_helical_dom_sf"/>
</dbReference>
<dbReference type="InterPro" id="IPR019734">
    <property type="entry name" value="TPR_rpt"/>
</dbReference>
<dbReference type="NCBIfam" id="NF008520">
    <property type="entry name" value="PRK11447.1"/>
    <property type="match status" value="1"/>
</dbReference>
<dbReference type="PANTHER" id="PTHR12558">
    <property type="entry name" value="CELL DIVISION CYCLE 16,23,27"/>
    <property type="match status" value="1"/>
</dbReference>
<dbReference type="PANTHER" id="PTHR12558:SF13">
    <property type="entry name" value="CELL DIVISION CYCLE PROTEIN 27 HOMOLOG"/>
    <property type="match status" value="1"/>
</dbReference>
<dbReference type="Pfam" id="PF05420">
    <property type="entry name" value="BCSC_C"/>
    <property type="match status" value="1"/>
</dbReference>
<dbReference type="Pfam" id="PF13432">
    <property type="entry name" value="TPR_16"/>
    <property type="match status" value="2"/>
</dbReference>
<dbReference type="Pfam" id="PF14559">
    <property type="entry name" value="TPR_19"/>
    <property type="match status" value="2"/>
</dbReference>
<dbReference type="SMART" id="SM00028">
    <property type="entry name" value="TPR"/>
    <property type="match status" value="6"/>
</dbReference>
<dbReference type="SUPFAM" id="SSF48452">
    <property type="entry name" value="TPR-like"/>
    <property type="match status" value="3"/>
</dbReference>
<dbReference type="PROSITE" id="PS50005">
    <property type="entry name" value="TPR"/>
    <property type="match status" value="6"/>
</dbReference>
<dbReference type="PROSITE" id="PS50293">
    <property type="entry name" value="TPR_REGION"/>
    <property type="match status" value="1"/>
</dbReference>
<keyword id="KW-0135">Cellulose biosynthesis</keyword>
<keyword id="KW-1185">Reference proteome</keyword>
<keyword id="KW-0677">Repeat</keyword>
<keyword id="KW-0732">Signal</keyword>
<keyword id="KW-0802">TPR repeat</keyword>
<reference key="1">
    <citation type="journal article" date="2001" name="Mol. Microbiol.">
        <title>The multicellular morphotypes of Salmonella typhimurium and Escherichia coli produce cellulose as the second component of the extracellular matrix.</title>
        <authorList>
            <person name="Zogaj X."/>
            <person name="Nimtz M."/>
            <person name="Rohde M."/>
            <person name="Bokranz W."/>
            <person name="Roemling U."/>
        </authorList>
    </citation>
    <scope>NUCLEOTIDE SEQUENCE [GENOMIC DNA]</scope>
    <source>
        <strain>ATCC 14028 / SGSG 2980 / CDC 6516-60 / NCTC 12023</strain>
    </source>
</reference>
<reference key="2">
    <citation type="journal article" date="2002" name="Mol. Microbiol.">
        <title>Genetic analysis of Salmonella enteritidis biofilm formation: critical role of cellulose.</title>
        <authorList>
            <person name="Solano C."/>
            <person name="Garcia B."/>
            <person name="Valle J."/>
            <person name="Berasain C."/>
            <person name="Ghigo J.-M."/>
            <person name="Gamazo C."/>
            <person name="Lasa I."/>
        </authorList>
    </citation>
    <scope>NUCLEOTIDE SEQUENCE [GENOMIC DNA]</scope>
    <source>
        <strain>LT2</strain>
    </source>
</reference>
<reference key="3">
    <citation type="journal article" date="2001" name="Nature">
        <title>Complete genome sequence of Salmonella enterica serovar Typhimurium LT2.</title>
        <authorList>
            <person name="McClelland M."/>
            <person name="Sanderson K.E."/>
            <person name="Spieth J."/>
            <person name="Clifton S.W."/>
            <person name="Latreille P."/>
            <person name="Courtney L."/>
            <person name="Porwollik S."/>
            <person name="Ali J."/>
            <person name="Dante M."/>
            <person name="Du F."/>
            <person name="Hou S."/>
            <person name="Layman D."/>
            <person name="Leonard S."/>
            <person name="Nguyen C."/>
            <person name="Scott K."/>
            <person name="Holmes A."/>
            <person name="Grewal N."/>
            <person name="Mulvaney E."/>
            <person name="Ryan E."/>
            <person name="Sun H."/>
            <person name="Florea L."/>
            <person name="Miller W."/>
            <person name="Stoneking T."/>
            <person name="Nhan M."/>
            <person name="Waterston R."/>
            <person name="Wilson R.K."/>
        </authorList>
    </citation>
    <scope>NUCLEOTIDE SEQUENCE [LARGE SCALE GENOMIC DNA]</scope>
    <source>
        <strain>LT2 / SGSC1412 / ATCC 700720</strain>
    </source>
</reference>
<gene>
    <name type="primary">bcsC</name>
    <name type="ordered locus">STM3616</name>
</gene>
<sequence length="1180" mass="129801">MRKFTLSLMHAFLPAGGRNALPGKRGVSRALLGLSLGMALTPLAGAATSAQQQLLEQVRLGEATHREDLVRQSLYRLELIDPNDPQVIAARFRYLLRQGDSDGAQKLLDRLAQLAPESTAYQSSRTAMLLSTPQGRQSLQEARLLATTGHTEQAIASYDKLFKGYPPEGELAVEYWTTVAKLPARRHEAINQLQKINAVSPGNNALQNALAQLLFASGRRDEGFAVLKQMAKSSTGRSAASAIWYQQIKDLPVSDASVKALQDYLTQFSEGDSVSAARAQLSEQQKQLADPAFRARSQGIAAVNAGEGGKAIAQLQQAVSARQDDSEAVGALGQAYSQRGDRARAVAQFEKALAMAPHSSSRDKWESLLKVNRYWLLIQQGDAALKANNLAQAERFYQQARAVDNTDSYAVLGLGDVAMARKDNAAAERYYQQTLRMDSGNTNAVRGLANLYRQQSPQKAAAFIASLSASQRRSIDDIERSLENDRLAQQAETLESEGKWAQAAELHRRRLALDPGSVWVTYRLSRDLWQAGQHAQADAQMRSLAQQKPNDPEQVYAYGLYLSGSDRDRAALAHLNTLPTSQWNSNIQELAGRLQSNQVLESANRLRDSGKEREAEALLRQQPPSTRIALTLADWAQQRGDNAAARAAYDAVLAREPGNVDAMLGRVEIDIAQGDNAAARAQLAALPASQITSINMQRRVALAQLQLGDITAAARTFNRITPQAKAQPPSMESAMVLRDAAAFQAQTGEPQRALETYKDAMVAAAITPVRPQDNDTFTRLTRNDEKDDWLKRGVRSDAAELYRQQDLNVTLAHDYWGSSGTGGYSDLKAHTTMLQVDAPWSDGRAFFRTDMVNMDVGRFSTDADGKYDNNWGTCTLEKCSGHRSQADTGASVAVGWQNETWRWDIGTTPMGFNVVDVVGGVSYSDDIGPLGYTLNAHRRPISSSLLAFGGQKDASSNTGTKWGGVRANGGGVSLSYDKGEANGVWASLSGDQLSGKNVEDNWRVRWMTGYYYKVINENNRRVTVGLNNMIWHYDKDLSGYSLGQGGYYSPQEYLSFAVPVMWRQRTENWSWELGGSVSWSHSRNRTMPRYPLMNLIPADYQEDARDQTNGGGSSQGFGYTARALIERRVTANWFVGTAVDIQQAKDYTPSHLLLYVRYSAAGWQGDMDLPPQPLVPYADW</sequence>
<evidence type="ECO:0000250" key="1"/>
<evidence type="ECO:0000255" key="2"/>
<evidence type="ECO:0000305" key="3"/>
<name>BCSC_SALTY</name>